<comment type="function">
    <text evidence="1">Key enzyme in the regulation of glycerol uptake and metabolism. Catalyzes the phosphorylation of glycerol to yield sn-glycerol 3-phosphate.</text>
</comment>
<comment type="catalytic activity">
    <reaction evidence="1">
        <text>glycerol + ATP = sn-glycerol 3-phosphate + ADP + H(+)</text>
        <dbReference type="Rhea" id="RHEA:21644"/>
        <dbReference type="ChEBI" id="CHEBI:15378"/>
        <dbReference type="ChEBI" id="CHEBI:17754"/>
        <dbReference type="ChEBI" id="CHEBI:30616"/>
        <dbReference type="ChEBI" id="CHEBI:57597"/>
        <dbReference type="ChEBI" id="CHEBI:456216"/>
        <dbReference type="EC" id="2.7.1.30"/>
    </reaction>
</comment>
<comment type="activity regulation">
    <text evidence="1">Inhibited by fructose 1,6-bisphosphate (FBP).</text>
</comment>
<comment type="pathway">
    <text evidence="1">Polyol metabolism; glycerol degradation via glycerol kinase pathway; sn-glycerol 3-phosphate from glycerol: step 1/1.</text>
</comment>
<comment type="similarity">
    <text evidence="1">Belongs to the FGGY kinase family.</text>
</comment>
<feature type="chain" id="PRO_1000118546" description="Glycerol kinase">
    <location>
        <begin position="1"/>
        <end position="501"/>
    </location>
</feature>
<feature type="binding site" evidence="1">
    <location>
        <position position="11"/>
    </location>
    <ligand>
        <name>ADP</name>
        <dbReference type="ChEBI" id="CHEBI:456216"/>
    </ligand>
</feature>
<feature type="binding site" evidence="1">
    <location>
        <position position="11"/>
    </location>
    <ligand>
        <name>ATP</name>
        <dbReference type="ChEBI" id="CHEBI:30616"/>
    </ligand>
</feature>
<feature type="binding site" evidence="1">
    <location>
        <position position="11"/>
    </location>
    <ligand>
        <name>sn-glycerol 3-phosphate</name>
        <dbReference type="ChEBI" id="CHEBI:57597"/>
    </ligand>
</feature>
<feature type="binding site" evidence="1">
    <location>
        <position position="12"/>
    </location>
    <ligand>
        <name>ATP</name>
        <dbReference type="ChEBI" id="CHEBI:30616"/>
    </ligand>
</feature>
<feature type="binding site" evidence="1">
    <location>
        <position position="13"/>
    </location>
    <ligand>
        <name>ATP</name>
        <dbReference type="ChEBI" id="CHEBI:30616"/>
    </ligand>
</feature>
<feature type="binding site" evidence="1">
    <location>
        <position position="15"/>
    </location>
    <ligand>
        <name>ADP</name>
        <dbReference type="ChEBI" id="CHEBI:456216"/>
    </ligand>
</feature>
<feature type="binding site" evidence="1">
    <location>
        <position position="81"/>
    </location>
    <ligand>
        <name>glycerol</name>
        <dbReference type="ChEBI" id="CHEBI:17754"/>
    </ligand>
</feature>
<feature type="binding site" evidence="1">
    <location>
        <position position="81"/>
    </location>
    <ligand>
        <name>sn-glycerol 3-phosphate</name>
        <dbReference type="ChEBI" id="CHEBI:57597"/>
    </ligand>
</feature>
<feature type="binding site" evidence="1">
    <location>
        <position position="82"/>
    </location>
    <ligand>
        <name>glycerol</name>
        <dbReference type="ChEBI" id="CHEBI:17754"/>
    </ligand>
</feature>
<feature type="binding site" evidence="1">
    <location>
        <position position="82"/>
    </location>
    <ligand>
        <name>sn-glycerol 3-phosphate</name>
        <dbReference type="ChEBI" id="CHEBI:57597"/>
    </ligand>
</feature>
<feature type="binding site" evidence="1">
    <location>
        <position position="133"/>
    </location>
    <ligand>
        <name>glycerol</name>
        <dbReference type="ChEBI" id="CHEBI:17754"/>
    </ligand>
</feature>
<feature type="binding site" evidence="1">
    <location>
        <position position="133"/>
    </location>
    <ligand>
        <name>sn-glycerol 3-phosphate</name>
        <dbReference type="ChEBI" id="CHEBI:57597"/>
    </ligand>
</feature>
<feature type="binding site" evidence="1">
    <location>
        <position position="242"/>
    </location>
    <ligand>
        <name>glycerol</name>
        <dbReference type="ChEBI" id="CHEBI:17754"/>
    </ligand>
</feature>
<feature type="binding site" evidence="1">
    <location>
        <position position="242"/>
    </location>
    <ligand>
        <name>sn-glycerol 3-phosphate</name>
        <dbReference type="ChEBI" id="CHEBI:57597"/>
    </ligand>
</feature>
<feature type="binding site" evidence="1">
    <location>
        <position position="243"/>
    </location>
    <ligand>
        <name>glycerol</name>
        <dbReference type="ChEBI" id="CHEBI:17754"/>
    </ligand>
</feature>
<feature type="binding site" evidence="1">
    <location>
        <position position="264"/>
    </location>
    <ligand>
        <name>ADP</name>
        <dbReference type="ChEBI" id="CHEBI:456216"/>
    </ligand>
</feature>
<feature type="binding site" evidence="1">
    <location>
        <position position="264"/>
    </location>
    <ligand>
        <name>ATP</name>
        <dbReference type="ChEBI" id="CHEBI:30616"/>
    </ligand>
</feature>
<feature type="binding site" evidence="1">
    <location>
        <position position="307"/>
    </location>
    <ligand>
        <name>ADP</name>
        <dbReference type="ChEBI" id="CHEBI:456216"/>
    </ligand>
</feature>
<feature type="binding site" evidence="1">
    <location>
        <position position="307"/>
    </location>
    <ligand>
        <name>ATP</name>
        <dbReference type="ChEBI" id="CHEBI:30616"/>
    </ligand>
</feature>
<feature type="binding site" evidence="1">
    <location>
        <position position="311"/>
    </location>
    <ligand>
        <name>ATP</name>
        <dbReference type="ChEBI" id="CHEBI:30616"/>
    </ligand>
</feature>
<feature type="binding site" evidence="1">
    <location>
        <position position="409"/>
    </location>
    <ligand>
        <name>ADP</name>
        <dbReference type="ChEBI" id="CHEBI:456216"/>
    </ligand>
</feature>
<feature type="binding site" evidence="1">
    <location>
        <position position="409"/>
    </location>
    <ligand>
        <name>ATP</name>
        <dbReference type="ChEBI" id="CHEBI:30616"/>
    </ligand>
</feature>
<feature type="binding site" evidence="1">
    <location>
        <position position="413"/>
    </location>
    <ligand>
        <name>ADP</name>
        <dbReference type="ChEBI" id="CHEBI:456216"/>
    </ligand>
</feature>
<gene>
    <name evidence="1" type="primary">glpK</name>
    <name type="ordered locus">BbuZS7_0246</name>
</gene>
<evidence type="ECO:0000255" key="1">
    <source>
        <dbReference type="HAMAP-Rule" id="MF_00186"/>
    </source>
</evidence>
<proteinExistence type="inferred from homology"/>
<accession>B7J1G9</accession>
<reference key="1">
    <citation type="journal article" date="2011" name="J. Bacteriol.">
        <title>Whole-genome sequences of thirteen isolates of Borrelia burgdorferi.</title>
        <authorList>
            <person name="Schutzer S.E."/>
            <person name="Fraser-Liggett C.M."/>
            <person name="Casjens S.R."/>
            <person name="Qiu W.G."/>
            <person name="Dunn J.J."/>
            <person name="Mongodin E.F."/>
            <person name="Luft B.J."/>
        </authorList>
    </citation>
    <scope>NUCLEOTIDE SEQUENCE [LARGE SCALE GENOMIC DNA]</scope>
    <source>
        <strain>ZS7</strain>
    </source>
</reference>
<keyword id="KW-0067">ATP-binding</keyword>
<keyword id="KW-0319">Glycerol metabolism</keyword>
<keyword id="KW-0418">Kinase</keyword>
<keyword id="KW-0547">Nucleotide-binding</keyword>
<keyword id="KW-0808">Transferase</keyword>
<sequence>MKYILSIDQGTTSSRAMVFDKNANIKGFAQKEFTQIYPQPSWVEHDPTEIWGSQLGVITEAMANARILPNEIDAIGITNQRETTVIWEKNTGKPIYNAIVWQDRRTAKICDQLKKEGKDKIILEKTGLVLDSYFSGTKIMWILDNVEGARQRAENGELCFGTIDTWILWNLTQKKEHATDYSNASRTLLLNIKTLEWDDELLSILNVPRAILPELKESSTIYGKTDKALFGAEIPIAGIAGDQFAATFGQACLKKGMAKNTYGTGCFLTVNIGKEPIISHDKLLTSIAWGRKKSVTYVLEGSVFIGGAVIQWLRDGLEFFRKSSDAEALASSVSDNGGVYFVPAFVGLGAPHWDSYARGTIIGITRGSTKAHITRAALESIAFQSFDILNTMKKSIPNFEIQELRVDGGASQNNLLMQFQADLLECKVVRPKITETTALGAAYLAGLATGYWQSAEEIVSLWQVDKIFEPSMPKNQKEKLLENWNKAVGKAKSWIQNSHSS</sequence>
<dbReference type="EC" id="2.7.1.30" evidence="1"/>
<dbReference type="EMBL" id="CP001205">
    <property type="protein sequence ID" value="ACK75210.1"/>
    <property type="molecule type" value="Genomic_DNA"/>
</dbReference>
<dbReference type="RefSeq" id="WP_002656192.1">
    <property type="nucleotide sequence ID" value="NC_011728.1"/>
</dbReference>
<dbReference type="SMR" id="B7J1G9"/>
<dbReference type="GeneID" id="56567671"/>
<dbReference type="KEGG" id="bbz:BbuZS7_0246"/>
<dbReference type="HOGENOM" id="CLU_009281_2_3_12"/>
<dbReference type="UniPathway" id="UPA00618">
    <property type="reaction ID" value="UER00672"/>
</dbReference>
<dbReference type="Proteomes" id="UP000006901">
    <property type="component" value="Chromosome"/>
</dbReference>
<dbReference type="GO" id="GO:0005829">
    <property type="term" value="C:cytosol"/>
    <property type="evidence" value="ECO:0007669"/>
    <property type="project" value="TreeGrafter"/>
</dbReference>
<dbReference type="GO" id="GO:0005524">
    <property type="term" value="F:ATP binding"/>
    <property type="evidence" value="ECO:0007669"/>
    <property type="project" value="UniProtKB-UniRule"/>
</dbReference>
<dbReference type="GO" id="GO:0004370">
    <property type="term" value="F:glycerol kinase activity"/>
    <property type="evidence" value="ECO:0000250"/>
    <property type="project" value="UniProtKB"/>
</dbReference>
<dbReference type="GO" id="GO:0019563">
    <property type="term" value="P:glycerol catabolic process"/>
    <property type="evidence" value="ECO:0007669"/>
    <property type="project" value="UniProtKB-UniRule"/>
</dbReference>
<dbReference type="GO" id="GO:0006071">
    <property type="term" value="P:glycerol metabolic process"/>
    <property type="evidence" value="ECO:0000250"/>
    <property type="project" value="UniProtKB"/>
</dbReference>
<dbReference type="GO" id="GO:0006072">
    <property type="term" value="P:glycerol-3-phosphate metabolic process"/>
    <property type="evidence" value="ECO:0007669"/>
    <property type="project" value="InterPro"/>
</dbReference>
<dbReference type="CDD" id="cd07786">
    <property type="entry name" value="FGGY_EcGK_like"/>
    <property type="match status" value="1"/>
</dbReference>
<dbReference type="FunFam" id="3.30.420.40:FF:000007">
    <property type="entry name" value="Glycerol kinase"/>
    <property type="match status" value="1"/>
</dbReference>
<dbReference type="FunFam" id="3.30.420.40:FF:000008">
    <property type="entry name" value="Glycerol kinase"/>
    <property type="match status" value="1"/>
</dbReference>
<dbReference type="Gene3D" id="3.30.420.40">
    <property type="match status" value="2"/>
</dbReference>
<dbReference type="HAMAP" id="MF_00186">
    <property type="entry name" value="Glycerol_kin"/>
    <property type="match status" value="1"/>
</dbReference>
<dbReference type="InterPro" id="IPR043129">
    <property type="entry name" value="ATPase_NBD"/>
</dbReference>
<dbReference type="InterPro" id="IPR000577">
    <property type="entry name" value="Carb_kinase_FGGY"/>
</dbReference>
<dbReference type="InterPro" id="IPR018483">
    <property type="entry name" value="Carb_kinase_FGGY_CS"/>
</dbReference>
<dbReference type="InterPro" id="IPR018485">
    <property type="entry name" value="FGGY_C"/>
</dbReference>
<dbReference type="InterPro" id="IPR018484">
    <property type="entry name" value="FGGY_N"/>
</dbReference>
<dbReference type="InterPro" id="IPR005999">
    <property type="entry name" value="Glycerol_kin"/>
</dbReference>
<dbReference type="NCBIfam" id="TIGR01311">
    <property type="entry name" value="glycerol_kin"/>
    <property type="match status" value="1"/>
</dbReference>
<dbReference type="NCBIfam" id="NF000756">
    <property type="entry name" value="PRK00047.1"/>
    <property type="match status" value="1"/>
</dbReference>
<dbReference type="PANTHER" id="PTHR10196:SF69">
    <property type="entry name" value="GLYCEROL KINASE"/>
    <property type="match status" value="1"/>
</dbReference>
<dbReference type="PANTHER" id="PTHR10196">
    <property type="entry name" value="SUGAR KINASE"/>
    <property type="match status" value="1"/>
</dbReference>
<dbReference type="Pfam" id="PF02782">
    <property type="entry name" value="FGGY_C"/>
    <property type="match status" value="1"/>
</dbReference>
<dbReference type="Pfam" id="PF00370">
    <property type="entry name" value="FGGY_N"/>
    <property type="match status" value="1"/>
</dbReference>
<dbReference type="PIRSF" id="PIRSF000538">
    <property type="entry name" value="GlpK"/>
    <property type="match status" value="1"/>
</dbReference>
<dbReference type="SUPFAM" id="SSF53067">
    <property type="entry name" value="Actin-like ATPase domain"/>
    <property type="match status" value="2"/>
</dbReference>
<dbReference type="PROSITE" id="PS00933">
    <property type="entry name" value="FGGY_KINASES_1"/>
    <property type="match status" value="1"/>
</dbReference>
<dbReference type="PROSITE" id="PS00445">
    <property type="entry name" value="FGGY_KINASES_2"/>
    <property type="match status" value="1"/>
</dbReference>
<protein>
    <recommendedName>
        <fullName evidence="1">Glycerol kinase</fullName>
        <ecNumber evidence="1">2.7.1.30</ecNumber>
    </recommendedName>
    <alternativeName>
        <fullName evidence="1">ATP:glycerol 3-phosphotransferase</fullName>
    </alternativeName>
    <alternativeName>
        <fullName evidence="1">Glycerokinase</fullName>
        <shortName evidence="1">GK</shortName>
    </alternativeName>
</protein>
<organism>
    <name type="scientific">Borreliella burgdorferi (strain ZS7)</name>
    <name type="common">Borrelia burgdorferi</name>
    <dbReference type="NCBI Taxonomy" id="445985"/>
    <lineage>
        <taxon>Bacteria</taxon>
        <taxon>Pseudomonadati</taxon>
        <taxon>Spirochaetota</taxon>
        <taxon>Spirochaetia</taxon>
        <taxon>Spirochaetales</taxon>
        <taxon>Borreliaceae</taxon>
        <taxon>Borreliella</taxon>
    </lineage>
</organism>
<name>GLPK_BORBZ</name>